<evidence type="ECO:0000255" key="1">
    <source>
        <dbReference type="HAMAP-Rule" id="MF_01220"/>
    </source>
</evidence>
<evidence type="ECO:0000256" key="2">
    <source>
        <dbReference type="SAM" id="MobiDB-lite"/>
    </source>
</evidence>
<dbReference type="EC" id="2.7.4.22" evidence="1"/>
<dbReference type="EMBL" id="LT708304">
    <property type="protein sequence ID" value="SIU01528.1"/>
    <property type="molecule type" value="Genomic_DNA"/>
</dbReference>
<dbReference type="RefSeq" id="NP_856552.1">
    <property type="nucleotide sequence ID" value="NC_002945.3"/>
</dbReference>
<dbReference type="RefSeq" id="WP_003414665.1">
    <property type="nucleotide sequence ID" value="NC_002945.4"/>
</dbReference>
<dbReference type="SMR" id="P65930"/>
<dbReference type="GeneID" id="45426871"/>
<dbReference type="KEGG" id="mbo:BQ2027_MB2907C"/>
<dbReference type="PATRIC" id="fig|233413.5.peg.3191"/>
<dbReference type="UniPathway" id="UPA00159">
    <property type="reaction ID" value="UER00275"/>
</dbReference>
<dbReference type="Proteomes" id="UP000001419">
    <property type="component" value="Chromosome"/>
</dbReference>
<dbReference type="GO" id="GO:0005737">
    <property type="term" value="C:cytoplasm"/>
    <property type="evidence" value="ECO:0007669"/>
    <property type="project" value="UniProtKB-SubCell"/>
</dbReference>
<dbReference type="GO" id="GO:0005524">
    <property type="term" value="F:ATP binding"/>
    <property type="evidence" value="ECO:0007669"/>
    <property type="project" value="UniProtKB-KW"/>
</dbReference>
<dbReference type="GO" id="GO:0033862">
    <property type="term" value="F:UMP kinase activity"/>
    <property type="evidence" value="ECO:0007669"/>
    <property type="project" value="UniProtKB-EC"/>
</dbReference>
<dbReference type="GO" id="GO:0044210">
    <property type="term" value="P:'de novo' CTP biosynthetic process"/>
    <property type="evidence" value="ECO:0007669"/>
    <property type="project" value="UniProtKB-UniRule"/>
</dbReference>
<dbReference type="GO" id="GO:0006225">
    <property type="term" value="P:UDP biosynthetic process"/>
    <property type="evidence" value="ECO:0007669"/>
    <property type="project" value="TreeGrafter"/>
</dbReference>
<dbReference type="CDD" id="cd04254">
    <property type="entry name" value="AAK_UMPK-PyrH-Ec"/>
    <property type="match status" value="1"/>
</dbReference>
<dbReference type="FunFam" id="3.40.1160.10:FF:000001">
    <property type="entry name" value="Uridylate kinase"/>
    <property type="match status" value="1"/>
</dbReference>
<dbReference type="Gene3D" id="3.40.1160.10">
    <property type="entry name" value="Acetylglutamate kinase-like"/>
    <property type="match status" value="1"/>
</dbReference>
<dbReference type="HAMAP" id="MF_01220_B">
    <property type="entry name" value="PyrH_B"/>
    <property type="match status" value="1"/>
</dbReference>
<dbReference type="InterPro" id="IPR036393">
    <property type="entry name" value="AceGlu_kinase-like_sf"/>
</dbReference>
<dbReference type="InterPro" id="IPR001048">
    <property type="entry name" value="Asp/Glu/Uridylate_kinase"/>
</dbReference>
<dbReference type="InterPro" id="IPR011817">
    <property type="entry name" value="Uridylate_kinase"/>
</dbReference>
<dbReference type="InterPro" id="IPR015963">
    <property type="entry name" value="Uridylate_kinase_bac"/>
</dbReference>
<dbReference type="NCBIfam" id="TIGR02075">
    <property type="entry name" value="pyrH_bact"/>
    <property type="match status" value="1"/>
</dbReference>
<dbReference type="PANTHER" id="PTHR42833">
    <property type="entry name" value="URIDYLATE KINASE"/>
    <property type="match status" value="1"/>
</dbReference>
<dbReference type="PANTHER" id="PTHR42833:SF4">
    <property type="entry name" value="URIDYLATE KINASE PUMPKIN, CHLOROPLASTIC"/>
    <property type="match status" value="1"/>
</dbReference>
<dbReference type="Pfam" id="PF00696">
    <property type="entry name" value="AA_kinase"/>
    <property type="match status" value="1"/>
</dbReference>
<dbReference type="PIRSF" id="PIRSF005650">
    <property type="entry name" value="Uridylate_kin"/>
    <property type="match status" value="1"/>
</dbReference>
<dbReference type="SUPFAM" id="SSF53633">
    <property type="entry name" value="Carbamate kinase-like"/>
    <property type="match status" value="1"/>
</dbReference>
<feature type="chain" id="PRO_0000143864" description="Uridylate kinase">
    <location>
        <begin position="1"/>
        <end position="261"/>
    </location>
</feature>
<feature type="region of interest" description="Disordered" evidence="2">
    <location>
        <begin position="1"/>
        <end position="23"/>
    </location>
</feature>
<feature type="binding site" evidence="1">
    <location>
        <begin position="36"/>
        <end position="39"/>
    </location>
    <ligand>
        <name>ATP</name>
        <dbReference type="ChEBI" id="CHEBI:30616"/>
    </ligand>
</feature>
<feature type="binding site" evidence="1">
    <location>
        <position position="77"/>
    </location>
    <ligand>
        <name>UMP</name>
        <dbReference type="ChEBI" id="CHEBI:57865"/>
    </ligand>
</feature>
<feature type="binding site" evidence="1">
    <location>
        <position position="78"/>
    </location>
    <ligand>
        <name>ATP</name>
        <dbReference type="ChEBI" id="CHEBI:30616"/>
    </ligand>
</feature>
<feature type="binding site" evidence="1">
    <location>
        <position position="82"/>
    </location>
    <ligand>
        <name>ATP</name>
        <dbReference type="ChEBI" id="CHEBI:30616"/>
    </ligand>
</feature>
<feature type="binding site" evidence="1">
    <location>
        <position position="97"/>
    </location>
    <ligand>
        <name>UMP</name>
        <dbReference type="ChEBI" id="CHEBI:57865"/>
    </ligand>
</feature>
<feature type="binding site" evidence="1">
    <location>
        <begin position="158"/>
        <end position="165"/>
    </location>
    <ligand>
        <name>UMP</name>
        <dbReference type="ChEBI" id="CHEBI:57865"/>
    </ligand>
</feature>
<feature type="binding site" evidence="1">
    <location>
        <position position="191"/>
    </location>
    <ligand>
        <name>ATP</name>
        <dbReference type="ChEBI" id="CHEBI:30616"/>
    </ligand>
</feature>
<feature type="binding site" evidence="1">
    <location>
        <position position="194"/>
    </location>
    <ligand>
        <name>ATP</name>
        <dbReference type="ChEBI" id="CHEBI:30616"/>
    </ligand>
</feature>
<accession>P65930</accession>
<accession>A0A1R3Y2W4</accession>
<accession>Q10791</accession>
<accession>X2BLW4</accession>
<reference key="1">
    <citation type="journal article" date="2003" name="Proc. Natl. Acad. Sci. U.S.A.">
        <title>The complete genome sequence of Mycobacterium bovis.</title>
        <authorList>
            <person name="Garnier T."/>
            <person name="Eiglmeier K."/>
            <person name="Camus J.-C."/>
            <person name="Medina N."/>
            <person name="Mansoor H."/>
            <person name="Pryor M."/>
            <person name="Duthoy S."/>
            <person name="Grondin S."/>
            <person name="Lacroix C."/>
            <person name="Monsempe C."/>
            <person name="Simon S."/>
            <person name="Harris B."/>
            <person name="Atkin R."/>
            <person name="Doggett J."/>
            <person name="Mayes R."/>
            <person name="Keating L."/>
            <person name="Wheeler P.R."/>
            <person name="Parkhill J."/>
            <person name="Barrell B.G."/>
            <person name="Cole S.T."/>
            <person name="Gordon S.V."/>
            <person name="Hewinson R.G."/>
        </authorList>
    </citation>
    <scope>NUCLEOTIDE SEQUENCE [LARGE SCALE GENOMIC DNA]</scope>
    <source>
        <strain>ATCC BAA-935 / AF2122/97</strain>
    </source>
</reference>
<reference key="2">
    <citation type="journal article" date="2017" name="Genome Announc.">
        <title>Updated reference genome sequence and annotation of Mycobacterium bovis AF2122/97.</title>
        <authorList>
            <person name="Malone K.M."/>
            <person name="Farrell D."/>
            <person name="Stuber T.P."/>
            <person name="Schubert O.T."/>
            <person name="Aebersold R."/>
            <person name="Robbe-Austerman S."/>
            <person name="Gordon S.V."/>
        </authorList>
    </citation>
    <scope>NUCLEOTIDE SEQUENCE [LARGE SCALE GENOMIC DNA]</scope>
    <scope>GENOME REANNOTATION</scope>
    <source>
        <strain>ATCC BAA-935 / AF2122/97</strain>
    </source>
</reference>
<protein>
    <recommendedName>
        <fullName evidence="1">Uridylate kinase</fullName>
        <shortName evidence="1">UK</shortName>
        <ecNumber evidence="1">2.7.4.22</ecNumber>
    </recommendedName>
    <alternativeName>
        <fullName evidence="1">Uridine monophosphate kinase</fullName>
        <shortName evidence="1">UMP kinase</shortName>
        <shortName evidence="1">UMPK</shortName>
    </alternativeName>
</protein>
<sequence>MTEPDVAGAPASKPEPASTGAASAAQLSGYSRVLLKLGGEMFGGGQVGLDPDVVAQVARQIADVVRGGVQIAVVIGGGNFFRGAQLQQLGMERTRSDYMGMLGTVMNSLALQDFLEKEGIVTRVQTAITMGQVAEPYLPLRAVRHLEKGRVVIFGAGMGLPYFSTDTTAAQRALEIGADVVLMAKAVDGVFAEDPRVNPEAELLTAVSHREVLDRGLRVADATAFSLCMDNGMPILVFNLLTDGNIARAVRGEKIGTLVTT</sequence>
<name>PYRH_MYCBO</name>
<comment type="function">
    <text evidence="1">Catalyzes the reversible phosphorylation of UMP to UDP.</text>
</comment>
<comment type="catalytic activity">
    <reaction evidence="1">
        <text>UMP + ATP = UDP + ADP</text>
        <dbReference type="Rhea" id="RHEA:24400"/>
        <dbReference type="ChEBI" id="CHEBI:30616"/>
        <dbReference type="ChEBI" id="CHEBI:57865"/>
        <dbReference type="ChEBI" id="CHEBI:58223"/>
        <dbReference type="ChEBI" id="CHEBI:456216"/>
        <dbReference type="EC" id="2.7.4.22"/>
    </reaction>
</comment>
<comment type="activity regulation">
    <text evidence="1">Inhibited by UTP.</text>
</comment>
<comment type="pathway">
    <text evidence="1">Pyrimidine metabolism; CTP biosynthesis via de novo pathway; UDP from UMP (UMPK route): step 1/1.</text>
</comment>
<comment type="subunit">
    <text evidence="1">Homohexamer.</text>
</comment>
<comment type="subcellular location">
    <subcellularLocation>
        <location evidence="1">Cytoplasm</location>
    </subcellularLocation>
</comment>
<comment type="similarity">
    <text evidence="1">Belongs to the UMP kinase family.</text>
</comment>
<keyword id="KW-0067">ATP-binding</keyword>
<keyword id="KW-0963">Cytoplasm</keyword>
<keyword id="KW-0418">Kinase</keyword>
<keyword id="KW-0547">Nucleotide-binding</keyword>
<keyword id="KW-0665">Pyrimidine biosynthesis</keyword>
<keyword id="KW-1185">Reference proteome</keyword>
<keyword id="KW-0808">Transferase</keyword>
<proteinExistence type="inferred from homology"/>
<organism>
    <name type="scientific">Mycobacterium bovis (strain ATCC BAA-935 / AF2122/97)</name>
    <dbReference type="NCBI Taxonomy" id="233413"/>
    <lineage>
        <taxon>Bacteria</taxon>
        <taxon>Bacillati</taxon>
        <taxon>Actinomycetota</taxon>
        <taxon>Actinomycetes</taxon>
        <taxon>Mycobacteriales</taxon>
        <taxon>Mycobacteriaceae</taxon>
        <taxon>Mycobacterium</taxon>
        <taxon>Mycobacterium tuberculosis complex</taxon>
    </lineage>
</organism>
<gene>
    <name evidence="1" type="primary">pyrH</name>
    <name type="ordered locus">BQ2027_MB2907C</name>
</gene>